<accession>Q4R8X3</accession>
<keyword id="KW-0007">Acetylation</keyword>
<keyword id="KW-0072">Autophagy</keyword>
<keyword id="KW-0963">Cytoplasm</keyword>
<keyword id="KW-0342">GTP-binding</keyword>
<keyword id="KW-0378">Hydrolase</keyword>
<keyword id="KW-0449">Lipoprotein</keyword>
<keyword id="KW-0460">Magnesium</keyword>
<keyword id="KW-0472">Membrane</keyword>
<keyword id="KW-0479">Metal-binding</keyword>
<keyword id="KW-0488">Methylation</keyword>
<keyword id="KW-0547">Nucleotide-binding</keyword>
<keyword id="KW-0597">Phosphoprotein</keyword>
<keyword id="KW-0636">Prenylation</keyword>
<keyword id="KW-0653">Protein transport</keyword>
<keyword id="KW-1185">Reference proteome</keyword>
<keyword id="KW-0813">Transport</keyword>
<name>RAB1B_MACFA</name>
<dbReference type="EC" id="3.6.5.2" evidence="2"/>
<dbReference type="EMBL" id="AB168324">
    <property type="protein sequence ID" value="BAE00448.1"/>
    <property type="molecule type" value="mRNA"/>
</dbReference>
<dbReference type="RefSeq" id="NP_001270956.1">
    <property type="nucleotide sequence ID" value="NM_001284027.1"/>
</dbReference>
<dbReference type="SMR" id="Q4R8X3"/>
<dbReference type="STRING" id="9541.ENSMFAP00000002423"/>
<dbReference type="eggNOG" id="KOG0084">
    <property type="taxonomic scope" value="Eukaryota"/>
</dbReference>
<dbReference type="Proteomes" id="UP000233100">
    <property type="component" value="Unplaced"/>
</dbReference>
<dbReference type="GO" id="GO:0048471">
    <property type="term" value="C:perinuclear region of cytoplasm"/>
    <property type="evidence" value="ECO:0007669"/>
    <property type="project" value="UniProtKB-SubCell"/>
</dbReference>
<dbReference type="GO" id="GO:0034045">
    <property type="term" value="C:phagophore assembly site membrane"/>
    <property type="evidence" value="ECO:0007669"/>
    <property type="project" value="UniProtKB-SubCell"/>
</dbReference>
<dbReference type="GO" id="GO:0003925">
    <property type="term" value="F:G protein activity"/>
    <property type="evidence" value="ECO:0007669"/>
    <property type="project" value="UniProtKB-EC"/>
</dbReference>
<dbReference type="GO" id="GO:0005525">
    <property type="term" value="F:GTP binding"/>
    <property type="evidence" value="ECO:0000250"/>
    <property type="project" value="UniProtKB"/>
</dbReference>
<dbReference type="GO" id="GO:0006914">
    <property type="term" value="P:autophagy"/>
    <property type="evidence" value="ECO:0007669"/>
    <property type="project" value="UniProtKB-KW"/>
</dbReference>
<dbReference type="GO" id="GO:0007030">
    <property type="term" value="P:Golgi organization"/>
    <property type="evidence" value="ECO:0000250"/>
    <property type="project" value="UniProtKB"/>
</dbReference>
<dbReference type="GO" id="GO:0015031">
    <property type="term" value="P:protein transport"/>
    <property type="evidence" value="ECO:0007669"/>
    <property type="project" value="UniProtKB-KW"/>
</dbReference>
<dbReference type="CDD" id="cd01869">
    <property type="entry name" value="Rab1_Ypt1"/>
    <property type="match status" value="1"/>
</dbReference>
<dbReference type="FunFam" id="3.40.50.300:FF:000069">
    <property type="entry name" value="Ras GTP-binding protein YPT1"/>
    <property type="match status" value="1"/>
</dbReference>
<dbReference type="Gene3D" id="3.40.50.300">
    <property type="entry name" value="P-loop containing nucleotide triphosphate hydrolases"/>
    <property type="match status" value="1"/>
</dbReference>
<dbReference type="InterPro" id="IPR027417">
    <property type="entry name" value="P-loop_NTPase"/>
</dbReference>
<dbReference type="InterPro" id="IPR050227">
    <property type="entry name" value="Rab"/>
</dbReference>
<dbReference type="InterPro" id="IPR005225">
    <property type="entry name" value="Small_GTP-bd"/>
</dbReference>
<dbReference type="InterPro" id="IPR001806">
    <property type="entry name" value="Small_GTPase"/>
</dbReference>
<dbReference type="NCBIfam" id="TIGR00231">
    <property type="entry name" value="small_GTP"/>
    <property type="match status" value="1"/>
</dbReference>
<dbReference type="PANTHER" id="PTHR47977">
    <property type="entry name" value="RAS-RELATED PROTEIN RAB"/>
    <property type="match status" value="1"/>
</dbReference>
<dbReference type="Pfam" id="PF00071">
    <property type="entry name" value="Ras"/>
    <property type="match status" value="1"/>
</dbReference>
<dbReference type="PRINTS" id="PR00449">
    <property type="entry name" value="RASTRNSFRMNG"/>
</dbReference>
<dbReference type="SMART" id="SM00177">
    <property type="entry name" value="ARF"/>
    <property type="match status" value="1"/>
</dbReference>
<dbReference type="SMART" id="SM00175">
    <property type="entry name" value="RAB"/>
    <property type="match status" value="1"/>
</dbReference>
<dbReference type="SMART" id="SM00176">
    <property type="entry name" value="RAN"/>
    <property type="match status" value="1"/>
</dbReference>
<dbReference type="SMART" id="SM00173">
    <property type="entry name" value="RAS"/>
    <property type="match status" value="1"/>
</dbReference>
<dbReference type="SMART" id="SM00174">
    <property type="entry name" value="RHO"/>
    <property type="match status" value="1"/>
</dbReference>
<dbReference type="SUPFAM" id="SSF52540">
    <property type="entry name" value="P-loop containing nucleoside triphosphate hydrolases"/>
    <property type="match status" value="1"/>
</dbReference>
<dbReference type="PROSITE" id="PS51419">
    <property type="entry name" value="RAB"/>
    <property type="match status" value="1"/>
</dbReference>
<sequence length="201" mass="22199">MNPEYDYLFKLLLIGDSGVGKSCLLLRFADDTYTESYISTIGVDFKIRTIELDGKTIKLQIWDTAGQERFRTITSSYYRGAHGIIVVYDVTDRESYANVKQWLQEIDRYASENVNKLLVGNKSDLTTKKVVDNTTAKEFADSLGIPFLETSAKNATNVEQAFMTMAAEIKKRMGPGAASGGERPNLKIDSTPVKPAGGGCC</sequence>
<protein>
    <recommendedName>
        <fullName>Ras-related protein Rab-1B</fullName>
        <ecNumber evidence="2">3.6.5.2</ecNumber>
    </recommendedName>
</protein>
<reference key="1">
    <citation type="submission" date="2005-06" db="EMBL/GenBank/DDBJ databases">
        <title>DNA sequences of macaque genes expressed in brain or testis and its evolutionary implications.</title>
        <authorList>
            <consortium name="International consortium for macaque cDNA sequencing and analysis"/>
        </authorList>
    </citation>
    <scope>NUCLEOTIDE SEQUENCE [LARGE SCALE MRNA]</scope>
    <source>
        <tissue>Testis</tissue>
    </source>
</reference>
<evidence type="ECO:0000250" key="1">
    <source>
        <dbReference type="UniProtKB" id="P10536"/>
    </source>
</evidence>
<evidence type="ECO:0000250" key="2">
    <source>
        <dbReference type="UniProtKB" id="P62820"/>
    </source>
</evidence>
<evidence type="ECO:0000250" key="3">
    <source>
        <dbReference type="UniProtKB" id="Q9D1G1"/>
    </source>
</evidence>
<evidence type="ECO:0000250" key="4">
    <source>
        <dbReference type="UniProtKB" id="Q9H0U4"/>
    </source>
</evidence>
<evidence type="ECO:0000255" key="5"/>
<evidence type="ECO:0000256" key="6">
    <source>
        <dbReference type="SAM" id="MobiDB-lite"/>
    </source>
</evidence>
<evidence type="ECO:0000305" key="7"/>
<organism>
    <name type="scientific">Macaca fascicularis</name>
    <name type="common">Crab-eating macaque</name>
    <name type="synonym">Cynomolgus monkey</name>
    <dbReference type="NCBI Taxonomy" id="9541"/>
    <lineage>
        <taxon>Eukaryota</taxon>
        <taxon>Metazoa</taxon>
        <taxon>Chordata</taxon>
        <taxon>Craniata</taxon>
        <taxon>Vertebrata</taxon>
        <taxon>Euteleostomi</taxon>
        <taxon>Mammalia</taxon>
        <taxon>Eutheria</taxon>
        <taxon>Euarchontoglires</taxon>
        <taxon>Primates</taxon>
        <taxon>Haplorrhini</taxon>
        <taxon>Catarrhini</taxon>
        <taxon>Cercopithecidae</taxon>
        <taxon>Cercopithecinae</taxon>
        <taxon>Macaca</taxon>
    </lineage>
</organism>
<feature type="chain" id="PRO_0000260521" description="Ras-related protein Rab-1B">
    <location>
        <begin position="1"/>
        <end position="201"/>
    </location>
</feature>
<feature type="region of interest" description="Switch 2 region; required for interaction with REP1/CHM" evidence="4">
    <location>
        <begin position="64"/>
        <end position="83"/>
    </location>
</feature>
<feature type="region of interest" description="Disordered" evidence="6">
    <location>
        <begin position="174"/>
        <end position="201"/>
    </location>
</feature>
<feature type="short sequence motif" description="Switch 1" evidence="4">
    <location>
        <begin position="30"/>
        <end position="45"/>
    </location>
</feature>
<feature type="short sequence motif" description="Switch 2" evidence="4">
    <location>
        <begin position="65"/>
        <end position="80"/>
    </location>
</feature>
<feature type="binding site" evidence="4">
    <location>
        <position position="17"/>
    </location>
    <ligand>
        <name>GTP</name>
        <dbReference type="ChEBI" id="CHEBI:37565"/>
    </ligand>
</feature>
<feature type="binding site" evidence="4">
    <location>
        <position position="18"/>
    </location>
    <ligand>
        <name>GTP</name>
        <dbReference type="ChEBI" id="CHEBI:37565"/>
    </ligand>
</feature>
<feature type="binding site" evidence="4">
    <location>
        <position position="19"/>
    </location>
    <ligand>
        <name>GTP</name>
        <dbReference type="ChEBI" id="CHEBI:37565"/>
    </ligand>
</feature>
<feature type="binding site" evidence="4">
    <location>
        <position position="20"/>
    </location>
    <ligand>
        <name>GTP</name>
        <dbReference type="ChEBI" id="CHEBI:37565"/>
    </ligand>
</feature>
<feature type="binding site" evidence="4">
    <location>
        <position position="21"/>
    </location>
    <ligand>
        <name>GTP</name>
        <dbReference type="ChEBI" id="CHEBI:37565"/>
    </ligand>
</feature>
<feature type="binding site" evidence="4">
    <location>
        <position position="22"/>
    </location>
    <ligand>
        <name>GTP</name>
        <dbReference type="ChEBI" id="CHEBI:37565"/>
    </ligand>
</feature>
<feature type="binding site" evidence="4">
    <location>
        <position position="22"/>
    </location>
    <ligand>
        <name>Mg(2+)</name>
        <dbReference type="ChEBI" id="CHEBI:18420"/>
    </ligand>
</feature>
<feature type="binding site" evidence="4">
    <location>
        <position position="23"/>
    </location>
    <ligand>
        <name>GTP</name>
        <dbReference type="ChEBI" id="CHEBI:37565"/>
    </ligand>
</feature>
<feature type="binding site" evidence="4">
    <location>
        <position position="33"/>
    </location>
    <ligand>
        <name>GTP</name>
        <dbReference type="ChEBI" id="CHEBI:37565"/>
    </ligand>
</feature>
<feature type="binding site" evidence="4">
    <location>
        <position position="34"/>
    </location>
    <ligand>
        <name>GTP</name>
        <dbReference type="ChEBI" id="CHEBI:37565"/>
    </ligand>
</feature>
<feature type="binding site" evidence="4">
    <location>
        <position position="35"/>
    </location>
    <ligand>
        <name>GTP</name>
        <dbReference type="ChEBI" id="CHEBI:37565"/>
    </ligand>
</feature>
<feature type="binding site" evidence="4">
    <location>
        <position position="36"/>
    </location>
    <ligand>
        <name>GTP</name>
        <dbReference type="ChEBI" id="CHEBI:37565"/>
    </ligand>
</feature>
<feature type="binding site" evidence="4">
    <location>
        <position position="39"/>
    </location>
    <ligand>
        <name>GTP</name>
        <dbReference type="ChEBI" id="CHEBI:37565"/>
    </ligand>
</feature>
<feature type="binding site" evidence="4">
    <location>
        <position position="40"/>
    </location>
    <ligand>
        <name>GTP</name>
        <dbReference type="ChEBI" id="CHEBI:37565"/>
    </ligand>
</feature>
<feature type="binding site" evidence="4">
    <location>
        <position position="40"/>
    </location>
    <ligand>
        <name>Mg(2+)</name>
        <dbReference type="ChEBI" id="CHEBI:18420"/>
    </ligand>
</feature>
<feature type="binding site" evidence="4">
    <location>
        <position position="63"/>
    </location>
    <ligand>
        <name>Mg(2+)</name>
        <dbReference type="ChEBI" id="CHEBI:18420"/>
    </ligand>
</feature>
<feature type="binding site" evidence="4">
    <location>
        <position position="66"/>
    </location>
    <ligand>
        <name>GTP</name>
        <dbReference type="ChEBI" id="CHEBI:37565"/>
    </ligand>
</feature>
<feature type="binding site" evidence="4">
    <location>
        <position position="121"/>
    </location>
    <ligand>
        <name>GTP</name>
        <dbReference type="ChEBI" id="CHEBI:37565"/>
    </ligand>
</feature>
<feature type="binding site" evidence="4">
    <location>
        <position position="122"/>
    </location>
    <ligand>
        <name>GTP</name>
        <dbReference type="ChEBI" id="CHEBI:37565"/>
    </ligand>
</feature>
<feature type="binding site" evidence="4">
    <location>
        <position position="124"/>
    </location>
    <ligand>
        <name>GTP</name>
        <dbReference type="ChEBI" id="CHEBI:37565"/>
    </ligand>
</feature>
<feature type="binding site" evidence="4">
    <location>
        <position position="151"/>
    </location>
    <ligand>
        <name>GTP</name>
        <dbReference type="ChEBI" id="CHEBI:37565"/>
    </ligand>
</feature>
<feature type="binding site" evidence="4">
    <location>
        <position position="152"/>
    </location>
    <ligand>
        <name>GTP</name>
        <dbReference type="ChEBI" id="CHEBI:37565"/>
    </ligand>
</feature>
<feature type="binding site" evidence="4">
    <location>
        <position position="153"/>
    </location>
    <ligand>
        <name>GTP</name>
        <dbReference type="ChEBI" id="CHEBI:37565"/>
    </ligand>
</feature>
<feature type="modified residue" description="N-acetylmethionine" evidence="4">
    <location>
        <position position="1"/>
    </location>
</feature>
<feature type="modified residue" description="Cysteine methyl ester" evidence="5">
    <location>
        <position position="201"/>
    </location>
</feature>
<feature type="lipid moiety-binding region" description="S-geranylgeranyl cysteine" evidence="4">
    <location>
        <position position="200"/>
    </location>
</feature>
<feature type="lipid moiety-binding region" description="S-geranylgeranyl cysteine" evidence="4">
    <location>
        <position position="201"/>
    </location>
</feature>
<gene>
    <name type="primary">RAB1B</name>
    <name type="ORF">QtsA-11222</name>
</gene>
<proteinExistence type="evidence at transcript level"/>
<comment type="function">
    <text evidence="1 4">The small GTPases Rab are key regulators of intracellular membrane trafficking, from the formation of transport vesicles to their fusion with membranes. Rabs cycle between an inactive GDP-bound form and an active GTP-bound form that is able to recruit to membranes different set of downstream effectors directly responsible for vesicle formation, movement, tethering and fusion (By similarity). Plays a role in the initial events of the autophagic vacuole development which take place at specialized regions of the endoplasmic reticulum (By similarity). Regulates vesicular transport between the endoplasmic reticulum and successive Golgi compartments. Required to modulate the compacted morphology of the Golgi. Promotes the recruitment of lipid phosphatase MTMR6 to the endoplasmic reticulum-Golgi intermediate compartment (By similarity).</text>
</comment>
<comment type="catalytic activity">
    <reaction evidence="2">
        <text>GTP + H2O = GDP + phosphate + H(+)</text>
        <dbReference type="Rhea" id="RHEA:19669"/>
        <dbReference type="ChEBI" id="CHEBI:15377"/>
        <dbReference type="ChEBI" id="CHEBI:15378"/>
        <dbReference type="ChEBI" id="CHEBI:37565"/>
        <dbReference type="ChEBI" id="CHEBI:43474"/>
        <dbReference type="ChEBI" id="CHEBI:58189"/>
        <dbReference type="EC" id="3.6.5.2"/>
    </reaction>
    <physiologicalReaction direction="left-to-right" evidence="2">
        <dbReference type="Rhea" id="RHEA:19670"/>
    </physiologicalReaction>
</comment>
<comment type="cofactor">
    <cofactor evidence="4">
        <name>Mg(2+)</name>
        <dbReference type="ChEBI" id="CHEBI:18420"/>
    </cofactor>
</comment>
<comment type="activity regulation">
    <text evidence="4">Regulated by guanine nucleotide exchange factors (GEFs) which promote the exchange of bound GDP for free GTP. Regulated by GTPase activating proteins (GAPs) including TBC1D20 which increases the GTP hydrolysis activity. Inhibited by GDP dissociation inhibitors (GDIs).</text>
</comment>
<comment type="subunit">
    <text evidence="3 4">Interacts with MICAL1 and MICAL2. Interacts (in GTP-bound form) with MICALCL, MICAL1 and MILCAL3. Interacts with GDI1; the interaction requires the GDP-bound state. Interacts with CHM/REP1; the interaction requires the GDP-bound form and is necessary for prenylation by GGTase II. Interacts with RabGAP TBC1D20. Interacts (in GDP-bound form) with lipid phosphatase MTMR6 (via GRAM domain); the interaction regulates MTMR6 recruitment to the endoplasmic reticulum-Golgi intermediate compartment (By similarity). Interacts (in GDP-bound form) with lipid phosphatase MTMR7 (By similarity).</text>
</comment>
<comment type="subcellular location">
    <subcellularLocation>
        <location evidence="1">Cytoplasm</location>
    </subcellularLocation>
    <subcellularLocation>
        <location evidence="1">Membrane</location>
        <topology evidence="1">Lipid-anchor</topology>
        <orientation evidence="1">Cytoplasmic side</orientation>
    </subcellularLocation>
    <subcellularLocation>
        <location evidence="4">Preautophagosomal structure membrane</location>
        <topology evidence="1">Lipid-anchor</topology>
        <orientation evidence="1">Cytoplasmic side</orientation>
    </subcellularLocation>
    <subcellularLocation>
        <location evidence="1">Cytoplasm</location>
        <location evidence="1">Perinuclear region</location>
    </subcellularLocation>
    <text evidence="1 4">Targeted by REP1 to membranes of specific subcellular compartments including endoplasmic reticulum, Golgi apparatus, and intermediate vesicles between these two compartments. In the GDP-form, colocalizes with GDI in the cytoplasm (By similarity). Co-localizes with MTMR6 to the endoplasmic reticulum-Golgi intermediate compartment and to the peri-Golgi region (By similarity).</text>
</comment>
<comment type="domain">
    <text evidence="4">Switch 1, switch 2 and the interswitch regions are characteristic of Rab GTPases and mediate the interactions with Rab downstream effectors. The switch regions undergo conformational changes upon nucleotide binding which drives interaction with specific sets of effector proteins, with most effectors only binding to GTP-bound Rab.</text>
</comment>
<comment type="PTM">
    <text evidence="4">Prenylated; by GGTase II, only after interaction of the substrate with Rab escort protein 1 (REP1).</text>
</comment>
<comment type="miscellaneous">
    <text evidence="4">Rab-1B binds GTP and GDP and possesses intrinsic GTPase activity.</text>
</comment>
<comment type="similarity">
    <text evidence="7">Belongs to the small GTPase superfamily. Rab family.</text>
</comment>